<protein>
    <recommendedName>
        <fullName evidence="1">Glutamyl-tRNA(Gln) amidotransferase subunit A</fullName>
        <shortName evidence="1">Glu-ADT subunit A</shortName>
        <ecNumber evidence="1">6.3.5.7</ecNumber>
    </recommendedName>
</protein>
<proteinExistence type="inferred from homology"/>
<reference key="1">
    <citation type="journal article" date="2006" name="DNA Res.">
        <title>Genome sequence of the cat pathogen, Chlamydophila felis.</title>
        <authorList>
            <person name="Azuma Y."/>
            <person name="Hirakawa H."/>
            <person name="Yamashita A."/>
            <person name="Cai Y."/>
            <person name="Rahman M.A."/>
            <person name="Suzuki H."/>
            <person name="Mitaku S."/>
            <person name="Toh H."/>
            <person name="Goto S."/>
            <person name="Murakami T."/>
            <person name="Sugi K."/>
            <person name="Hayashi H."/>
            <person name="Fukushi H."/>
            <person name="Hattori M."/>
            <person name="Kuhara S."/>
            <person name="Shirai M."/>
        </authorList>
    </citation>
    <scope>NUCLEOTIDE SEQUENCE [LARGE SCALE GENOMIC DNA]</scope>
    <source>
        <strain>Fe/C-56</strain>
    </source>
</reference>
<comment type="function">
    <text evidence="1">Allows the formation of correctly charged Gln-tRNA(Gln) through the transamidation of misacylated Glu-tRNA(Gln) in organisms which lack glutaminyl-tRNA synthetase. The reaction takes place in the presence of glutamine and ATP through an activated gamma-phospho-Glu-tRNA(Gln).</text>
</comment>
<comment type="catalytic activity">
    <reaction evidence="1">
        <text>L-glutamyl-tRNA(Gln) + L-glutamine + ATP + H2O = L-glutaminyl-tRNA(Gln) + L-glutamate + ADP + phosphate + H(+)</text>
        <dbReference type="Rhea" id="RHEA:17521"/>
        <dbReference type="Rhea" id="RHEA-COMP:9681"/>
        <dbReference type="Rhea" id="RHEA-COMP:9684"/>
        <dbReference type="ChEBI" id="CHEBI:15377"/>
        <dbReference type="ChEBI" id="CHEBI:15378"/>
        <dbReference type="ChEBI" id="CHEBI:29985"/>
        <dbReference type="ChEBI" id="CHEBI:30616"/>
        <dbReference type="ChEBI" id="CHEBI:43474"/>
        <dbReference type="ChEBI" id="CHEBI:58359"/>
        <dbReference type="ChEBI" id="CHEBI:78520"/>
        <dbReference type="ChEBI" id="CHEBI:78521"/>
        <dbReference type="ChEBI" id="CHEBI:456216"/>
        <dbReference type="EC" id="6.3.5.7"/>
    </reaction>
</comment>
<comment type="subunit">
    <text evidence="1">Heterotrimer of A, B and C subunits.</text>
</comment>
<comment type="similarity">
    <text evidence="1">Belongs to the amidase family. GatA subfamily.</text>
</comment>
<accession>Q253Q1</accession>
<sequence>MYRKSALELRNSVVSGESSATAIAEYFYNRIETEDSRIGAFLSLCKERAYEKAAIVDAKRERGEPLGKLAGVPIGIKDNIHVTGLRTTCASKMLENYIAPFDATVIKRIEAEDGIILGKLNMDEFAMGSTTQYSAFHPTKNPWDLSCVPGGSSGGSAAAVSARFCPMALGSDTGGSIRQPAAFCGVVGFKPSYGAVSRYGLVAFGSSLDQIGPLTTVVEDVALAMDVFAGKDKNDATTQEFFTGSFQDALSLEVPSLIGVPMGFLEGLRDDIKENFFASLNVLERQGSHIVDIDLDILHHAVSVYYIVASAEAATNLARFDGIRYGYRSLEAHSMEDVYTLSRVQGFGKEVMRRILLGNYVLSAERQSVYYKKGTAIRAKIIQAFQKAYEKCEVIAMPVCSCPAFADGEILDPISLYLQDIYTVAMNLAYLPAIAVPSGFSKEGLPLGLQIIGQQGRDQQVCQVGYSFQEHSGIKNICPEGCNKLFDGEVK</sequence>
<dbReference type="EC" id="6.3.5.7" evidence="1"/>
<dbReference type="EMBL" id="AP006861">
    <property type="protein sequence ID" value="BAE81487.1"/>
    <property type="molecule type" value="Genomic_DNA"/>
</dbReference>
<dbReference type="RefSeq" id="WP_011458265.1">
    <property type="nucleotide sequence ID" value="NC_007899.1"/>
</dbReference>
<dbReference type="SMR" id="Q253Q1"/>
<dbReference type="STRING" id="264202.CF0715"/>
<dbReference type="KEGG" id="cfe:CF0715"/>
<dbReference type="eggNOG" id="COG0154">
    <property type="taxonomic scope" value="Bacteria"/>
</dbReference>
<dbReference type="HOGENOM" id="CLU_009600_0_3_0"/>
<dbReference type="OrthoDB" id="9811471at2"/>
<dbReference type="Proteomes" id="UP000001260">
    <property type="component" value="Chromosome"/>
</dbReference>
<dbReference type="GO" id="GO:0030956">
    <property type="term" value="C:glutamyl-tRNA(Gln) amidotransferase complex"/>
    <property type="evidence" value="ECO:0007669"/>
    <property type="project" value="InterPro"/>
</dbReference>
<dbReference type="GO" id="GO:0005524">
    <property type="term" value="F:ATP binding"/>
    <property type="evidence" value="ECO:0007669"/>
    <property type="project" value="UniProtKB-KW"/>
</dbReference>
<dbReference type="GO" id="GO:0050567">
    <property type="term" value="F:glutaminyl-tRNA synthase (glutamine-hydrolyzing) activity"/>
    <property type="evidence" value="ECO:0007669"/>
    <property type="project" value="UniProtKB-UniRule"/>
</dbReference>
<dbReference type="GO" id="GO:0006412">
    <property type="term" value="P:translation"/>
    <property type="evidence" value="ECO:0007669"/>
    <property type="project" value="UniProtKB-UniRule"/>
</dbReference>
<dbReference type="Gene3D" id="3.90.1300.10">
    <property type="entry name" value="Amidase signature (AS) domain"/>
    <property type="match status" value="1"/>
</dbReference>
<dbReference type="HAMAP" id="MF_00120">
    <property type="entry name" value="GatA"/>
    <property type="match status" value="1"/>
</dbReference>
<dbReference type="InterPro" id="IPR000120">
    <property type="entry name" value="Amidase"/>
</dbReference>
<dbReference type="InterPro" id="IPR020556">
    <property type="entry name" value="Amidase_CS"/>
</dbReference>
<dbReference type="InterPro" id="IPR023631">
    <property type="entry name" value="Amidase_dom"/>
</dbReference>
<dbReference type="InterPro" id="IPR036928">
    <property type="entry name" value="AS_sf"/>
</dbReference>
<dbReference type="InterPro" id="IPR004412">
    <property type="entry name" value="GatA"/>
</dbReference>
<dbReference type="NCBIfam" id="TIGR00132">
    <property type="entry name" value="gatA"/>
    <property type="match status" value="1"/>
</dbReference>
<dbReference type="PANTHER" id="PTHR11895:SF151">
    <property type="entry name" value="GLUTAMYL-TRNA(GLN) AMIDOTRANSFERASE SUBUNIT A"/>
    <property type="match status" value="1"/>
</dbReference>
<dbReference type="PANTHER" id="PTHR11895">
    <property type="entry name" value="TRANSAMIDASE"/>
    <property type="match status" value="1"/>
</dbReference>
<dbReference type="Pfam" id="PF01425">
    <property type="entry name" value="Amidase"/>
    <property type="match status" value="1"/>
</dbReference>
<dbReference type="SUPFAM" id="SSF75304">
    <property type="entry name" value="Amidase signature (AS) enzymes"/>
    <property type="match status" value="1"/>
</dbReference>
<dbReference type="PROSITE" id="PS00571">
    <property type="entry name" value="AMIDASES"/>
    <property type="match status" value="1"/>
</dbReference>
<organism>
    <name type="scientific">Chlamydia felis (strain Fe/C-56)</name>
    <name type="common">Chlamydophila felis</name>
    <dbReference type="NCBI Taxonomy" id="264202"/>
    <lineage>
        <taxon>Bacteria</taxon>
        <taxon>Pseudomonadati</taxon>
        <taxon>Chlamydiota</taxon>
        <taxon>Chlamydiia</taxon>
        <taxon>Chlamydiales</taxon>
        <taxon>Chlamydiaceae</taxon>
        <taxon>Chlamydia/Chlamydophila group</taxon>
        <taxon>Chlamydia</taxon>
    </lineage>
</organism>
<keyword id="KW-0067">ATP-binding</keyword>
<keyword id="KW-0436">Ligase</keyword>
<keyword id="KW-0547">Nucleotide-binding</keyword>
<keyword id="KW-0648">Protein biosynthesis</keyword>
<name>GATA_CHLFF</name>
<gene>
    <name evidence="1" type="primary">gatA</name>
    <name type="ordered locus">CF0715</name>
</gene>
<evidence type="ECO:0000255" key="1">
    <source>
        <dbReference type="HAMAP-Rule" id="MF_00120"/>
    </source>
</evidence>
<feature type="chain" id="PRO_0000241088" description="Glutamyl-tRNA(Gln) amidotransferase subunit A">
    <location>
        <begin position="1"/>
        <end position="491"/>
    </location>
</feature>
<feature type="active site" description="Charge relay system" evidence="1">
    <location>
        <position position="77"/>
    </location>
</feature>
<feature type="active site" description="Charge relay system" evidence="1">
    <location>
        <position position="152"/>
    </location>
</feature>
<feature type="active site" description="Acyl-ester intermediate" evidence="1">
    <location>
        <position position="176"/>
    </location>
</feature>